<sequence>MSGARPLTVVVVDDSLTTRALIAAALRRDPRVKIVGTAGTPFEARDLIVRLNPDVLTLDFEMPSMNGLQFLEKIMRLRPMPVVMVSGHLSSHRGLVEQSLRMGAAEWYSKTTTANGEDPFAGLGDAIVRAAAMKQQAPVPVATDSANRTVPKIGTVVGIGASTGGVEALTDVLGHFPVACPPTVIVQHMPRQFSESFARRLDRIVKPEVRLAEEGDMLKPGTVYVASGGERHLRVRCGARSGEYVCQLVAAPPVNGHRPSVDELFYSLATTVGKNAVGVILTGMECDGAQGLLAMRHAGASTIGQDRASSVIYGMPRAAYELGAVETQLPLSAIGPAILNLCERRSLETYP</sequence>
<evidence type="ECO:0000255" key="1">
    <source>
        <dbReference type="HAMAP-Rule" id="MF_00099"/>
    </source>
</evidence>
<comment type="function">
    <text evidence="1">Involved in chemotaxis. Part of a chemotaxis signal transduction system that modulates chemotaxis in response to various stimuli. Catalyzes the demethylation of specific methylglutamate residues introduced into the chemoreceptors (methyl-accepting chemotaxis proteins or MCP) by CheR. Also mediates the irreversible deamidation of specific glutamine residues to glutamic acid.</text>
</comment>
<comment type="catalytic activity">
    <reaction evidence="1">
        <text>[protein]-L-glutamate 5-O-methyl ester + H2O = L-glutamyl-[protein] + methanol + H(+)</text>
        <dbReference type="Rhea" id="RHEA:23236"/>
        <dbReference type="Rhea" id="RHEA-COMP:10208"/>
        <dbReference type="Rhea" id="RHEA-COMP:10311"/>
        <dbReference type="ChEBI" id="CHEBI:15377"/>
        <dbReference type="ChEBI" id="CHEBI:15378"/>
        <dbReference type="ChEBI" id="CHEBI:17790"/>
        <dbReference type="ChEBI" id="CHEBI:29973"/>
        <dbReference type="ChEBI" id="CHEBI:82795"/>
        <dbReference type="EC" id="3.1.1.61"/>
    </reaction>
</comment>
<comment type="catalytic activity">
    <reaction evidence="1">
        <text>L-glutaminyl-[protein] + H2O = L-glutamyl-[protein] + NH4(+)</text>
        <dbReference type="Rhea" id="RHEA:16441"/>
        <dbReference type="Rhea" id="RHEA-COMP:10207"/>
        <dbReference type="Rhea" id="RHEA-COMP:10208"/>
        <dbReference type="ChEBI" id="CHEBI:15377"/>
        <dbReference type="ChEBI" id="CHEBI:28938"/>
        <dbReference type="ChEBI" id="CHEBI:29973"/>
        <dbReference type="ChEBI" id="CHEBI:30011"/>
        <dbReference type="EC" id="3.5.1.44"/>
    </reaction>
</comment>
<comment type="subcellular location">
    <subcellularLocation>
        <location evidence="1">Cytoplasm</location>
    </subcellularLocation>
</comment>
<comment type="domain">
    <text evidence="1">Contains a C-terminal catalytic domain, and an N-terminal region which modulates catalytic activity.</text>
</comment>
<comment type="PTM">
    <text evidence="1">Phosphorylated by CheA. Phosphorylation of the N-terminal regulatory domain activates the methylesterase activity.</text>
</comment>
<comment type="similarity">
    <text evidence="1">Belongs to the CheB family.</text>
</comment>
<reference key="1">
    <citation type="journal article" date="2005" name="Nat. Biotechnol.">
        <title>Complete genome sequence of the acetic acid bacterium Gluconobacter oxydans.</title>
        <authorList>
            <person name="Prust C."/>
            <person name="Hoffmeister M."/>
            <person name="Liesegang H."/>
            <person name="Wiezer A."/>
            <person name="Fricke W.F."/>
            <person name="Ehrenreich A."/>
            <person name="Gottschalk G."/>
            <person name="Deppenmeier U."/>
        </authorList>
    </citation>
    <scope>NUCLEOTIDE SEQUENCE [LARGE SCALE GENOMIC DNA]</scope>
    <source>
        <strain>621H</strain>
    </source>
</reference>
<feature type="chain" id="PRO_0000225462" description="Protein-glutamate methylesterase/protein-glutamine glutaminase">
    <location>
        <begin position="1"/>
        <end position="351"/>
    </location>
</feature>
<feature type="domain" description="Response regulatory" evidence="1">
    <location>
        <begin position="8"/>
        <end position="125"/>
    </location>
</feature>
<feature type="domain" description="CheB-type methylesterase" evidence="1">
    <location>
        <begin position="151"/>
        <end position="345"/>
    </location>
</feature>
<feature type="active site" evidence="1">
    <location>
        <position position="162"/>
    </location>
</feature>
<feature type="active site" evidence="1">
    <location>
        <position position="188"/>
    </location>
</feature>
<feature type="active site" evidence="1">
    <location>
        <position position="287"/>
    </location>
</feature>
<feature type="modified residue" description="4-aspartylphosphate" evidence="1">
    <location>
        <position position="59"/>
    </location>
</feature>
<organism>
    <name type="scientific">Gluconobacter oxydans (strain 621H)</name>
    <name type="common">Gluconobacter suboxydans</name>
    <dbReference type="NCBI Taxonomy" id="290633"/>
    <lineage>
        <taxon>Bacteria</taxon>
        <taxon>Pseudomonadati</taxon>
        <taxon>Pseudomonadota</taxon>
        <taxon>Alphaproteobacteria</taxon>
        <taxon>Acetobacterales</taxon>
        <taxon>Acetobacteraceae</taxon>
        <taxon>Gluconobacter</taxon>
    </lineage>
</organism>
<dbReference type="EC" id="3.1.1.61" evidence="1"/>
<dbReference type="EC" id="3.5.1.44" evidence="1"/>
<dbReference type="EMBL" id="CP000009">
    <property type="protein sequence ID" value="AAW61296.1"/>
    <property type="molecule type" value="Genomic_DNA"/>
</dbReference>
<dbReference type="RefSeq" id="WP_011253081.1">
    <property type="nucleotide sequence ID" value="NC_006677.1"/>
</dbReference>
<dbReference type="SMR" id="Q5FQQ0"/>
<dbReference type="STRING" id="290633.GOX1555"/>
<dbReference type="KEGG" id="gox:GOX1555"/>
<dbReference type="eggNOG" id="COG2201">
    <property type="taxonomic scope" value="Bacteria"/>
</dbReference>
<dbReference type="HOGENOM" id="CLU_000445_51_0_5"/>
<dbReference type="Proteomes" id="UP000006375">
    <property type="component" value="Chromosome"/>
</dbReference>
<dbReference type="GO" id="GO:0005737">
    <property type="term" value="C:cytoplasm"/>
    <property type="evidence" value="ECO:0007669"/>
    <property type="project" value="UniProtKB-SubCell"/>
</dbReference>
<dbReference type="GO" id="GO:0000156">
    <property type="term" value="F:phosphorelay response regulator activity"/>
    <property type="evidence" value="ECO:0007669"/>
    <property type="project" value="InterPro"/>
</dbReference>
<dbReference type="GO" id="GO:0008984">
    <property type="term" value="F:protein-glutamate methylesterase activity"/>
    <property type="evidence" value="ECO:0007669"/>
    <property type="project" value="UniProtKB-UniRule"/>
</dbReference>
<dbReference type="GO" id="GO:0050568">
    <property type="term" value="F:protein-glutamine glutaminase activity"/>
    <property type="evidence" value="ECO:0007669"/>
    <property type="project" value="UniProtKB-UniRule"/>
</dbReference>
<dbReference type="GO" id="GO:0006935">
    <property type="term" value="P:chemotaxis"/>
    <property type="evidence" value="ECO:0007669"/>
    <property type="project" value="UniProtKB-UniRule"/>
</dbReference>
<dbReference type="CDD" id="cd16432">
    <property type="entry name" value="CheB_Rec"/>
    <property type="match status" value="1"/>
</dbReference>
<dbReference type="CDD" id="cd17541">
    <property type="entry name" value="REC_CheB-like"/>
    <property type="match status" value="1"/>
</dbReference>
<dbReference type="Gene3D" id="3.40.50.2300">
    <property type="match status" value="1"/>
</dbReference>
<dbReference type="Gene3D" id="3.40.50.180">
    <property type="entry name" value="Methylesterase CheB, C-terminal domain"/>
    <property type="match status" value="1"/>
</dbReference>
<dbReference type="HAMAP" id="MF_00099">
    <property type="entry name" value="CheB_chemtxs"/>
    <property type="match status" value="1"/>
</dbReference>
<dbReference type="InterPro" id="IPR008248">
    <property type="entry name" value="CheB-like"/>
</dbReference>
<dbReference type="InterPro" id="IPR035909">
    <property type="entry name" value="CheB_C"/>
</dbReference>
<dbReference type="InterPro" id="IPR011006">
    <property type="entry name" value="CheY-like_superfamily"/>
</dbReference>
<dbReference type="InterPro" id="IPR000673">
    <property type="entry name" value="Sig_transdc_resp-reg_Me-estase"/>
</dbReference>
<dbReference type="InterPro" id="IPR001789">
    <property type="entry name" value="Sig_transdc_resp-reg_receiver"/>
</dbReference>
<dbReference type="NCBIfam" id="NF001965">
    <property type="entry name" value="PRK00742.1"/>
    <property type="match status" value="1"/>
</dbReference>
<dbReference type="PANTHER" id="PTHR42872">
    <property type="entry name" value="PROTEIN-GLUTAMATE METHYLESTERASE/PROTEIN-GLUTAMINE GLUTAMINASE"/>
    <property type="match status" value="1"/>
</dbReference>
<dbReference type="PANTHER" id="PTHR42872:SF6">
    <property type="entry name" value="PROTEIN-GLUTAMATE METHYLESTERASE_PROTEIN-GLUTAMINE GLUTAMINASE"/>
    <property type="match status" value="1"/>
</dbReference>
<dbReference type="Pfam" id="PF01339">
    <property type="entry name" value="CheB_methylest"/>
    <property type="match status" value="1"/>
</dbReference>
<dbReference type="Pfam" id="PF00072">
    <property type="entry name" value="Response_reg"/>
    <property type="match status" value="1"/>
</dbReference>
<dbReference type="PIRSF" id="PIRSF000876">
    <property type="entry name" value="RR_chemtxs_CheB"/>
    <property type="match status" value="1"/>
</dbReference>
<dbReference type="SMART" id="SM00448">
    <property type="entry name" value="REC"/>
    <property type="match status" value="1"/>
</dbReference>
<dbReference type="SUPFAM" id="SSF52172">
    <property type="entry name" value="CheY-like"/>
    <property type="match status" value="1"/>
</dbReference>
<dbReference type="SUPFAM" id="SSF52738">
    <property type="entry name" value="Methylesterase CheB, C-terminal domain"/>
    <property type="match status" value="1"/>
</dbReference>
<dbReference type="PROSITE" id="PS50122">
    <property type="entry name" value="CHEB"/>
    <property type="match status" value="1"/>
</dbReference>
<dbReference type="PROSITE" id="PS50110">
    <property type="entry name" value="RESPONSE_REGULATORY"/>
    <property type="match status" value="1"/>
</dbReference>
<proteinExistence type="inferred from homology"/>
<keyword id="KW-0145">Chemotaxis</keyword>
<keyword id="KW-0963">Cytoplasm</keyword>
<keyword id="KW-0378">Hydrolase</keyword>
<keyword id="KW-0597">Phosphoprotein</keyword>
<keyword id="KW-1185">Reference proteome</keyword>
<gene>
    <name evidence="1" type="primary">cheB</name>
    <name type="ordered locus">GOX1555</name>
</gene>
<accession>Q5FQQ0</accession>
<protein>
    <recommendedName>
        <fullName evidence="1">Protein-glutamate methylesterase/protein-glutamine glutaminase</fullName>
        <ecNumber evidence="1">3.1.1.61</ecNumber>
        <ecNumber evidence="1">3.5.1.44</ecNumber>
    </recommendedName>
</protein>
<name>CHEB_GLUOX</name>